<organism>
    <name type="scientific">Ricinus communis</name>
    <name type="common">Castor bean</name>
    <dbReference type="NCBI Taxonomy" id="3988"/>
    <lineage>
        <taxon>Eukaryota</taxon>
        <taxon>Viridiplantae</taxon>
        <taxon>Streptophyta</taxon>
        <taxon>Embryophyta</taxon>
        <taxon>Tracheophyta</taxon>
        <taxon>Spermatophyta</taxon>
        <taxon>Magnoliopsida</taxon>
        <taxon>eudicotyledons</taxon>
        <taxon>Gunneridae</taxon>
        <taxon>Pentapetalae</taxon>
        <taxon>rosids</taxon>
        <taxon>fabids</taxon>
        <taxon>Malpighiales</taxon>
        <taxon>Euphorbiaceae</taxon>
        <taxon>Acalyphoideae</taxon>
        <taxon>Acalypheae</taxon>
        <taxon>Ricinus</taxon>
    </lineage>
</organism>
<reference key="1">
    <citation type="journal article" date="2010" name="Nat. Biotechnol.">
        <title>Draft genome sequence of the oilseed species Ricinus communis.</title>
        <authorList>
            <person name="Chan A.P."/>
            <person name="Crabtree J."/>
            <person name="Zhao Q."/>
            <person name="Lorenzi H."/>
            <person name="Orvis J."/>
            <person name="Puiu D."/>
            <person name="Melake-Berhan A."/>
            <person name="Jones K.M."/>
            <person name="Redman J."/>
            <person name="Chen G."/>
            <person name="Cahoon E.B."/>
            <person name="Gedil M."/>
            <person name="Stanke M."/>
            <person name="Haas B.J."/>
            <person name="Wortman J.R."/>
            <person name="Fraser-Liggett C.M."/>
            <person name="Ravel J."/>
            <person name="Rabinowicz P.D."/>
        </authorList>
    </citation>
    <scope>NUCLEOTIDE SEQUENCE [LARGE SCALE GENOMIC DNA]</scope>
    <source>
        <strain>cv. Hale</strain>
    </source>
</reference>
<reference key="2">
    <citation type="journal article" date="2012" name="Phytochemistry">
        <title>Functional characterization of four sesquiterpene synthases from Ricinus communis (castor bean).</title>
        <authorList>
            <person name="Xie X."/>
            <person name="Kirby J."/>
            <person name="Keasling J.D."/>
        </authorList>
    </citation>
    <scope>GENE NAME</scope>
</reference>
<sequence length="572" mass="65858">MALSSISIFIHCLVDPLPRKQTSKTLPSNHIDFKSAFNVANWSINQTLVSPLSAQCIHLTDEDVRIKERRTRAFKHILRKEGEGSHEVLAMIDAIQRLGIDHHFQDEIDEILQRQYTIPSYYNDNDLHGLALRFRLLRQGGYNVSAGVFDKFKDKEGNFDQKLSDDIRGLMELYEASQLSIGAEDHILDEAGDYSHQLLSSWMTRLDDSQARIIKNTLDHPHHKNLARFRATNFNRYFHMANIEGWMNELQELAKIDFQMVQSQNQQEIFQVAGWWKDLGISKELKFVRNQPLKWYIWSMATLSDPSLSQQRIDLTKPISFIYIIDDIFDVQGSLDELTLFTEIVKRWDVEAVEQLPGYMRACFKALDSVTNEIGYKVYKQHGWNPVHSLRETWASLCKAFLVEARWFASGHLPAAEEYLQNGIVSSGVHVVLVHIFYLLGHGVTREGVDFIGNRPAIITSTATILRLWDDLGISKDENQDGHDGSYVECYVKEHKGSLVEIATKKVTVMISDAWKQLNQECLHPNPFSPNFTKSCLNLARMVPLMYSYDDNHRLPVLEYYTKSLLFESVSI</sequence>
<protein>
    <recommendedName>
        <fullName>Probable terpene synthase 13</fullName>
        <shortName>RcSeTPS13</shortName>
        <ecNumber>4.2.3.-</ecNumber>
    </recommendedName>
</protein>
<evidence type="ECO:0000250" key="1"/>
<evidence type="ECO:0000305" key="2"/>
<evidence type="ECO:0000305" key="3">
    <source>
    </source>
</evidence>
<feature type="chain" id="PRO_0000422211" description="Probable terpene synthase 13">
    <location>
        <begin position="1"/>
        <end position="572"/>
    </location>
</feature>
<feature type="short sequence motif" description="DDXXD motif">
    <location>
        <begin position="326"/>
        <end position="330"/>
    </location>
</feature>
<feature type="binding site" evidence="1">
    <location>
        <position position="326"/>
    </location>
    <ligand>
        <name>Mg(2+)</name>
        <dbReference type="ChEBI" id="CHEBI:18420"/>
        <label>1</label>
    </ligand>
</feature>
<feature type="binding site" evidence="1">
    <location>
        <position position="326"/>
    </location>
    <ligand>
        <name>Mg(2+)</name>
        <dbReference type="ChEBI" id="CHEBI:18420"/>
        <label>2</label>
    </ligand>
</feature>
<feature type="binding site" evidence="1">
    <location>
        <position position="330"/>
    </location>
    <ligand>
        <name>Mg(2+)</name>
        <dbReference type="ChEBI" id="CHEBI:18420"/>
        <label>1</label>
    </ligand>
</feature>
<feature type="binding site" evidence="1">
    <location>
        <position position="330"/>
    </location>
    <ligand>
        <name>Mg(2+)</name>
        <dbReference type="ChEBI" id="CHEBI:18420"/>
        <label>2</label>
    </ligand>
</feature>
<feature type="binding site" evidence="1">
    <location>
        <position position="478"/>
    </location>
    <ligand>
        <name>Mg(2+)</name>
        <dbReference type="ChEBI" id="CHEBI:18420"/>
        <label>3</label>
    </ligand>
</feature>
<gene>
    <name type="primary">TPS13</name>
    <name type="ORF">RCOM_0906740</name>
</gene>
<keyword id="KW-0456">Lyase</keyword>
<keyword id="KW-0460">Magnesium</keyword>
<keyword id="KW-0479">Metal-binding</keyword>
<keyword id="KW-1185">Reference proteome</keyword>
<dbReference type="EC" id="4.2.3.-"/>
<dbReference type="EMBL" id="EQ973828">
    <property type="protein sequence ID" value="EEF43970.1"/>
    <property type="molecule type" value="Genomic_DNA"/>
</dbReference>
<dbReference type="RefSeq" id="XP_002518583.1">
    <property type="nucleotide sequence ID" value="XM_002518537.2"/>
</dbReference>
<dbReference type="SMR" id="B9RXW4"/>
<dbReference type="FunCoup" id="B9RXW4">
    <property type="interactions" value="19"/>
</dbReference>
<dbReference type="STRING" id="3988.B9RXW4"/>
<dbReference type="GeneID" id="8267425"/>
<dbReference type="KEGG" id="rcu:8267425"/>
<dbReference type="eggNOG" id="ENOG502QTGK">
    <property type="taxonomic scope" value="Eukaryota"/>
</dbReference>
<dbReference type="InParanoid" id="B9RXW4"/>
<dbReference type="OrthoDB" id="1921927at2759"/>
<dbReference type="Proteomes" id="UP000008311">
    <property type="component" value="Unassembled WGS sequence"/>
</dbReference>
<dbReference type="GO" id="GO:0000287">
    <property type="term" value="F:magnesium ion binding"/>
    <property type="evidence" value="ECO:0007669"/>
    <property type="project" value="InterPro"/>
</dbReference>
<dbReference type="GO" id="GO:0010333">
    <property type="term" value="F:terpene synthase activity"/>
    <property type="evidence" value="ECO:0007669"/>
    <property type="project" value="InterPro"/>
</dbReference>
<dbReference type="GO" id="GO:0016102">
    <property type="term" value="P:diterpenoid biosynthetic process"/>
    <property type="evidence" value="ECO:0007669"/>
    <property type="project" value="InterPro"/>
</dbReference>
<dbReference type="GO" id="GO:0120251">
    <property type="term" value="P:hydrocarbon biosynthetic process"/>
    <property type="evidence" value="ECO:0007669"/>
    <property type="project" value="UniProtKB-ARBA"/>
</dbReference>
<dbReference type="CDD" id="cd00684">
    <property type="entry name" value="Terpene_cyclase_plant_C1"/>
    <property type="match status" value="1"/>
</dbReference>
<dbReference type="FunFam" id="1.10.600.10:FF:000007">
    <property type="entry name" value="Isoprene synthase, chloroplastic"/>
    <property type="match status" value="1"/>
</dbReference>
<dbReference type="Gene3D" id="1.10.600.10">
    <property type="entry name" value="Farnesyl Diphosphate Synthase"/>
    <property type="match status" value="1"/>
</dbReference>
<dbReference type="Gene3D" id="1.50.10.130">
    <property type="entry name" value="Terpene synthase, N-terminal domain"/>
    <property type="match status" value="1"/>
</dbReference>
<dbReference type="InterPro" id="IPR008949">
    <property type="entry name" value="Isoprenoid_synthase_dom_sf"/>
</dbReference>
<dbReference type="InterPro" id="IPR034741">
    <property type="entry name" value="Terpene_cyclase-like_1_C"/>
</dbReference>
<dbReference type="InterPro" id="IPR044814">
    <property type="entry name" value="Terpene_cyclase_plant_C1"/>
</dbReference>
<dbReference type="InterPro" id="IPR001906">
    <property type="entry name" value="Terpene_synth_N"/>
</dbReference>
<dbReference type="InterPro" id="IPR036965">
    <property type="entry name" value="Terpene_synth_N_sf"/>
</dbReference>
<dbReference type="InterPro" id="IPR050148">
    <property type="entry name" value="Terpene_synthase-like"/>
</dbReference>
<dbReference type="InterPro" id="IPR005630">
    <property type="entry name" value="Terpene_synthase_metal-bd"/>
</dbReference>
<dbReference type="InterPro" id="IPR008930">
    <property type="entry name" value="Terpenoid_cyclase/PrenylTrfase"/>
</dbReference>
<dbReference type="PANTHER" id="PTHR31225">
    <property type="entry name" value="OS04G0344100 PROTEIN-RELATED"/>
    <property type="match status" value="1"/>
</dbReference>
<dbReference type="PANTHER" id="PTHR31225:SF0">
    <property type="entry name" value="S-(+)-LINALOOL SYNTHASE, CHLOROPLASTIC"/>
    <property type="match status" value="1"/>
</dbReference>
<dbReference type="Pfam" id="PF01397">
    <property type="entry name" value="Terpene_synth"/>
    <property type="match status" value="1"/>
</dbReference>
<dbReference type="Pfam" id="PF03936">
    <property type="entry name" value="Terpene_synth_C"/>
    <property type="match status" value="1"/>
</dbReference>
<dbReference type="SFLD" id="SFLDS00005">
    <property type="entry name" value="Isoprenoid_Synthase_Type_I"/>
    <property type="match status" value="1"/>
</dbReference>
<dbReference type="SFLD" id="SFLDG01019">
    <property type="entry name" value="Terpene_Cyclase_Like_1_C_Termi"/>
    <property type="match status" value="1"/>
</dbReference>
<dbReference type="SUPFAM" id="SSF48239">
    <property type="entry name" value="Terpenoid cyclases/Protein prenyltransferases"/>
    <property type="match status" value="1"/>
</dbReference>
<dbReference type="SUPFAM" id="SSF48576">
    <property type="entry name" value="Terpenoid synthases"/>
    <property type="match status" value="1"/>
</dbReference>
<comment type="function">
    <text evidence="1">Probable sesquiterpene synthase.</text>
</comment>
<comment type="cofactor">
    <cofactor evidence="1">
        <name>Mg(2+)</name>
        <dbReference type="ChEBI" id="CHEBI:18420"/>
    </cofactor>
    <text evidence="1">Binds 3 Mg(2+) ions per subunit.</text>
</comment>
<comment type="domain">
    <text evidence="1">The Asp-Asp-Xaa-Xaa-Asp/Glu (DDXXD/E) motif is important for the catalytic activity, presumably through binding to Mg(2+).</text>
</comment>
<comment type="miscellaneous">
    <text evidence="3">Does not produce any detectable product when tested in vitro.</text>
</comment>
<comment type="similarity">
    <text evidence="2">Belongs to the terpene synthase family.</text>
</comment>
<accession>B9RXW4</accession>
<proteinExistence type="inferred from homology"/>
<name>TPS13_RICCO</name>